<feature type="initiator methionine" description="Removed" evidence="8 9 10">
    <location>
        <position position="1"/>
    </location>
</feature>
<feature type="chain" id="PRO_0000058155" description="Platelet-activating factor acetylhydrolase IB subunit alpha1">
    <location>
        <begin position="2"/>
        <end position="231"/>
    </location>
</feature>
<feature type="active site" evidence="3">
    <location>
        <position position="47"/>
    </location>
</feature>
<feature type="active site" evidence="3">
    <location>
        <position position="192"/>
    </location>
</feature>
<feature type="active site" evidence="3">
    <location>
        <position position="195"/>
    </location>
</feature>
<feature type="modified residue" description="N-acetylserine" evidence="8 9 10">
    <location>
        <position position="2"/>
    </location>
</feature>
<feature type="modified residue" description="Phosphoserine" evidence="11">
    <location>
        <position position="2"/>
    </location>
</feature>
<feature type="sequence variant" id="VAR_051261" description="In dbSNP:rs1043818.">
    <original>R</original>
    <variation>G</variation>
    <location>
        <position position="214"/>
    </location>
</feature>
<accession>Q15102</accession>
<accession>Q53X88</accession>
<reference key="1">
    <citation type="journal article" date="1995" name="Biochem. Biophys. Res. Commun.">
        <title>cDNA cloning of human cytosolic platelet-activating factor acetylhydrolase gamma-subunit and its mRNA expression in human tissues.</title>
        <authorList>
            <person name="Adachi H."/>
            <person name="Tsujimoto M."/>
            <person name="Hattori M."/>
            <person name="Arai H."/>
            <person name="Inoue K."/>
        </authorList>
    </citation>
    <scope>NUCLEOTIDE SEQUENCE [MRNA]</scope>
    <source>
        <tissue>Fetal liver</tissue>
    </source>
</reference>
<reference key="2">
    <citation type="submission" date="2004-05" db="EMBL/GenBank/DDBJ databases">
        <title>Cloning of human full open reading frames in Gateway(TM) system entry vector (pDONR201).</title>
        <authorList>
            <person name="Ebert L."/>
            <person name="Schick M."/>
            <person name="Neubert P."/>
            <person name="Schatten R."/>
            <person name="Henze S."/>
            <person name="Korn B."/>
        </authorList>
    </citation>
    <scope>NUCLEOTIDE SEQUENCE [LARGE SCALE MRNA]</scope>
</reference>
<reference key="3">
    <citation type="journal article" date="2004" name="Nature">
        <title>The DNA sequence and biology of human chromosome 19.</title>
        <authorList>
            <person name="Grimwood J."/>
            <person name="Gordon L.A."/>
            <person name="Olsen A.S."/>
            <person name="Terry A."/>
            <person name="Schmutz J."/>
            <person name="Lamerdin J.E."/>
            <person name="Hellsten U."/>
            <person name="Goodstein D."/>
            <person name="Couronne O."/>
            <person name="Tran-Gyamfi M."/>
            <person name="Aerts A."/>
            <person name="Altherr M."/>
            <person name="Ashworth L."/>
            <person name="Bajorek E."/>
            <person name="Black S."/>
            <person name="Branscomb E."/>
            <person name="Caenepeel S."/>
            <person name="Carrano A.V."/>
            <person name="Caoile C."/>
            <person name="Chan Y.M."/>
            <person name="Christensen M."/>
            <person name="Cleland C.A."/>
            <person name="Copeland A."/>
            <person name="Dalin E."/>
            <person name="Dehal P."/>
            <person name="Denys M."/>
            <person name="Detter J.C."/>
            <person name="Escobar J."/>
            <person name="Flowers D."/>
            <person name="Fotopulos D."/>
            <person name="Garcia C."/>
            <person name="Georgescu A.M."/>
            <person name="Glavina T."/>
            <person name="Gomez M."/>
            <person name="Gonzales E."/>
            <person name="Groza M."/>
            <person name="Hammon N."/>
            <person name="Hawkins T."/>
            <person name="Haydu L."/>
            <person name="Ho I."/>
            <person name="Huang W."/>
            <person name="Israni S."/>
            <person name="Jett J."/>
            <person name="Kadner K."/>
            <person name="Kimball H."/>
            <person name="Kobayashi A."/>
            <person name="Larionov V."/>
            <person name="Leem S.-H."/>
            <person name="Lopez F."/>
            <person name="Lou Y."/>
            <person name="Lowry S."/>
            <person name="Malfatti S."/>
            <person name="Martinez D."/>
            <person name="McCready P.M."/>
            <person name="Medina C."/>
            <person name="Morgan J."/>
            <person name="Nelson K."/>
            <person name="Nolan M."/>
            <person name="Ovcharenko I."/>
            <person name="Pitluck S."/>
            <person name="Pollard M."/>
            <person name="Popkie A.P."/>
            <person name="Predki P."/>
            <person name="Quan G."/>
            <person name="Ramirez L."/>
            <person name="Rash S."/>
            <person name="Retterer J."/>
            <person name="Rodriguez A."/>
            <person name="Rogers S."/>
            <person name="Salamov A."/>
            <person name="Salazar A."/>
            <person name="She X."/>
            <person name="Smith D."/>
            <person name="Slezak T."/>
            <person name="Solovyev V."/>
            <person name="Thayer N."/>
            <person name="Tice H."/>
            <person name="Tsai M."/>
            <person name="Ustaszewska A."/>
            <person name="Vo N."/>
            <person name="Wagner M."/>
            <person name="Wheeler J."/>
            <person name="Wu K."/>
            <person name="Xie G."/>
            <person name="Yang J."/>
            <person name="Dubchak I."/>
            <person name="Furey T.S."/>
            <person name="DeJong P."/>
            <person name="Dickson M."/>
            <person name="Gordon D."/>
            <person name="Eichler E.E."/>
            <person name="Pennacchio L.A."/>
            <person name="Richardson P."/>
            <person name="Stubbs L."/>
            <person name="Rokhsar D.S."/>
            <person name="Myers R.M."/>
            <person name="Rubin E.M."/>
            <person name="Lucas S.M."/>
        </authorList>
    </citation>
    <scope>NUCLEOTIDE SEQUENCE [LARGE SCALE GENOMIC DNA]</scope>
</reference>
<reference key="4">
    <citation type="submission" date="2005-07" db="EMBL/GenBank/DDBJ databases">
        <authorList>
            <person name="Mural R.J."/>
            <person name="Istrail S."/>
            <person name="Sutton G.G."/>
            <person name="Florea L."/>
            <person name="Halpern A.L."/>
            <person name="Mobarry C.M."/>
            <person name="Lippert R."/>
            <person name="Walenz B."/>
            <person name="Shatkay H."/>
            <person name="Dew I."/>
            <person name="Miller J.R."/>
            <person name="Flanigan M.J."/>
            <person name="Edwards N.J."/>
            <person name="Bolanos R."/>
            <person name="Fasulo D."/>
            <person name="Halldorsson B.V."/>
            <person name="Hannenhalli S."/>
            <person name="Turner R."/>
            <person name="Yooseph S."/>
            <person name="Lu F."/>
            <person name="Nusskern D.R."/>
            <person name="Shue B.C."/>
            <person name="Zheng X.H."/>
            <person name="Zhong F."/>
            <person name="Delcher A.L."/>
            <person name="Huson D.H."/>
            <person name="Kravitz S.A."/>
            <person name="Mouchard L."/>
            <person name="Reinert K."/>
            <person name="Remington K.A."/>
            <person name="Clark A.G."/>
            <person name="Waterman M.S."/>
            <person name="Eichler E.E."/>
            <person name="Adams M.D."/>
            <person name="Hunkapiller M.W."/>
            <person name="Myers E.W."/>
            <person name="Venter J.C."/>
        </authorList>
    </citation>
    <scope>NUCLEOTIDE SEQUENCE [LARGE SCALE GENOMIC DNA]</scope>
</reference>
<reference key="5">
    <citation type="journal article" date="2004" name="Genome Res.">
        <title>The status, quality, and expansion of the NIH full-length cDNA project: the Mammalian Gene Collection (MGC).</title>
        <authorList>
            <consortium name="The MGC Project Team"/>
        </authorList>
    </citation>
    <scope>NUCLEOTIDE SEQUENCE [LARGE SCALE MRNA]</scope>
    <source>
        <tissue>Lung</tissue>
        <tissue>Uterus</tissue>
    </source>
</reference>
<reference key="6">
    <citation type="submission" date="2008-12" db="UniProtKB">
        <authorList>
            <person name="Lubec G."/>
            <person name="Chen W.-Q."/>
            <person name="Sun Y."/>
        </authorList>
    </citation>
    <scope>PROTEIN SEQUENCE OF 84-127; 133-141 AND 199-231</scope>
    <scope>IDENTIFICATION BY MASS SPECTROMETRY</scope>
    <source>
        <tissue>Fetal brain cortex</tissue>
    </source>
</reference>
<reference key="7">
    <citation type="journal article" date="2009" name="Anal. Chem.">
        <title>Lys-N and trypsin cover complementary parts of the phosphoproteome in a refined SCX-based approach.</title>
        <authorList>
            <person name="Gauci S."/>
            <person name="Helbig A.O."/>
            <person name="Slijper M."/>
            <person name="Krijgsveld J."/>
            <person name="Heck A.J."/>
            <person name="Mohammed S."/>
        </authorList>
    </citation>
    <scope>ACETYLATION [LARGE SCALE ANALYSIS] AT SER-2</scope>
    <scope>CLEAVAGE OF INITIATOR METHIONINE [LARGE SCALE ANALYSIS]</scope>
    <scope>IDENTIFICATION BY MASS SPECTROMETRY [LARGE SCALE ANALYSIS]</scope>
</reference>
<reference key="8">
    <citation type="journal article" date="2011" name="BMC Syst. Biol.">
        <title>Initial characterization of the human central proteome.</title>
        <authorList>
            <person name="Burkard T.R."/>
            <person name="Planyavsky M."/>
            <person name="Kaupe I."/>
            <person name="Breitwieser F.P."/>
            <person name="Buerckstuemmer T."/>
            <person name="Bennett K.L."/>
            <person name="Superti-Furga G."/>
            <person name="Colinge J."/>
        </authorList>
    </citation>
    <scope>IDENTIFICATION BY MASS SPECTROMETRY [LARGE SCALE ANALYSIS]</scope>
</reference>
<reference key="9">
    <citation type="journal article" date="2012" name="Mol. Cell. Proteomics">
        <title>Comparative large-scale characterisation of plant vs. mammal proteins reveals similar and idiosyncratic N-alpha acetylation features.</title>
        <authorList>
            <person name="Bienvenut W.V."/>
            <person name="Sumpton D."/>
            <person name="Martinez A."/>
            <person name="Lilla S."/>
            <person name="Espagne C."/>
            <person name="Meinnel T."/>
            <person name="Giglione C."/>
        </authorList>
    </citation>
    <scope>ACETYLATION [LARGE SCALE ANALYSIS] AT SER-2</scope>
    <scope>CLEAVAGE OF INITIATOR METHIONINE [LARGE SCALE ANALYSIS]</scope>
    <scope>IDENTIFICATION BY MASS SPECTROMETRY [LARGE SCALE ANALYSIS]</scope>
</reference>
<reference key="10">
    <citation type="journal article" date="2012" name="Proc. Natl. Acad. Sci. U.S.A.">
        <title>N-terminal acetylome analyses and functional insights of the N-terminal acetyltransferase NatB.</title>
        <authorList>
            <person name="Van Damme P."/>
            <person name="Lasa M."/>
            <person name="Polevoda B."/>
            <person name="Gazquez C."/>
            <person name="Elosegui-Artola A."/>
            <person name="Kim D.S."/>
            <person name="De Juan-Pardo E."/>
            <person name="Demeyer K."/>
            <person name="Hole K."/>
            <person name="Larrea E."/>
            <person name="Timmerman E."/>
            <person name="Prieto J."/>
            <person name="Arnesen T."/>
            <person name="Sherman F."/>
            <person name="Gevaert K."/>
            <person name="Aldabe R."/>
        </authorList>
    </citation>
    <scope>ACETYLATION [LARGE SCALE ANALYSIS] AT SER-2</scope>
    <scope>CLEAVAGE OF INITIATOR METHIONINE [LARGE SCALE ANALYSIS]</scope>
    <scope>IDENTIFICATION BY MASS SPECTROMETRY [LARGE SCALE ANALYSIS]</scope>
</reference>
<reference key="11">
    <citation type="journal article" date="2013" name="J. Proteome Res.">
        <title>Toward a comprehensive characterization of a human cancer cell phosphoproteome.</title>
        <authorList>
            <person name="Zhou H."/>
            <person name="Di Palma S."/>
            <person name="Preisinger C."/>
            <person name="Peng M."/>
            <person name="Polat A.N."/>
            <person name="Heck A.J."/>
            <person name="Mohammed S."/>
        </authorList>
    </citation>
    <scope>PHOSPHORYLATION [LARGE SCALE ANALYSIS] AT SER-2</scope>
    <scope>IDENTIFICATION BY MASS SPECTROMETRY [LARGE SCALE ANALYSIS]</scope>
    <source>
        <tissue>Erythroleukemia</tissue>
    </source>
</reference>
<reference key="12">
    <citation type="journal article" date="2015" name="Proteomics">
        <title>N-terminome analysis of the human mitochondrial proteome.</title>
        <authorList>
            <person name="Vaca Jacome A.S."/>
            <person name="Rabilloud T."/>
            <person name="Schaeffer-Reiss C."/>
            <person name="Rompais M."/>
            <person name="Ayoub D."/>
            <person name="Lane L."/>
            <person name="Bairoch A."/>
            <person name="Van Dorsselaer A."/>
            <person name="Carapito C."/>
        </authorList>
    </citation>
    <scope>IDENTIFICATION BY MASS SPECTROMETRY [LARGE SCALE ANALYSIS]</scope>
</reference>
<dbReference type="EC" id="3.1.1.47" evidence="3"/>
<dbReference type="EMBL" id="D63391">
    <property type="protein sequence ID" value="BAA09706.1"/>
    <property type="molecule type" value="mRNA"/>
</dbReference>
<dbReference type="EMBL" id="CR407626">
    <property type="protein sequence ID" value="CAG28554.1"/>
    <property type="molecule type" value="mRNA"/>
</dbReference>
<dbReference type="EMBL" id="AC006486">
    <property type="protein sequence ID" value="AAD11989.1"/>
    <property type="molecule type" value="Genomic_DNA"/>
</dbReference>
<dbReference type="EMBL" id="CH471126">
    <property type="protein sequence ID" value="EAW57122.1"/>
    <property type="molecule type" value="Genomic_DNA"/>
</dbReference>
<dbReference type="EMBL" id="BC003016">
    <property type="protein sequence ID" value="AAH03016.1"/>
    <property type="molecule type" value="mRNA"/>
</dbReference>
<dbReference type="EMBL" id="BC007863">
    <property type="protein sequence ID" value="AAH07863.1"/>
    <property type="molecule type" value="mRNA"/>
</dbReference>
<dbReference type="CCDS" id="CCDS12602.1"/>
<dbReference type="PIR" id="JC4246">
    <property type="entry name" value="JC4246"/>
</dbReference>
<dbReference type="RefSeq" id="NP_001139411.1">
    <property type="nucleotide sequence ID" value="NM_001145939.2"/>
</dbReference>
<dbReference type="RefSeq" id="NP_001139412.1">
    <property type="nucleotide sequence ID" value="NM_001145940.1"/>
</dbReference>
<dbReference type="RefSeq" id="NP_002564.1">
    <property type="nucleotide sequence ID" value="NM_002573.4"/>
</dbReference>
<dbReference type="SMR" id="Q15102"/>
<dbReference type="BioGRID" id="111087">
    <property type="interactions" value="69"/>
</dbReference>
<dbReference type="ComplexPortal" id="CPX-10326">
    <property type="entry name" value="Platelet-activating factor acetylhydrolase IB complex, alpha1-alpha1 variant"/>
</dbReference>
<dbReference type="ComplexPortal" id="CPX-10329">
    <property type="entry name" value="Platelet-activating factor acetylhydrolase IB complex, alpha1-alpha2 variant"/>
</dbReference>
<dbReference type="FunCoup" id="Q15102">
    <property type="interactions" value="480"/>
</dbReference>
<dbReference type="IntAct" id="Q15102">
    <property type="interactions" value="53"/>
</dbReference>
<dbReference type="MINT" id="Q15102"/>
<dbReference type="STRING" id="9606.ENSP00000444935"/>
<dbReference type="ChEMBL" id="CHEMBL5108"/>
<dbReference type="DrugBank" id="DB07821">
    <property type="generic name" value="(1R)-1,2,2-trimethylpropyl (R)-methylphosphinate"/>
</dbReference>
<dbReference type="GlyGen" id="Q15102">
    <property type="glycosylation" value="1 site, 1 O-linked glycan (1 site)"/>
</dbReference>
<dbReference type="iPTMnet" id="Q15102"/>
<dbReference type="PhosphoSitePlus" id="Q15102"/>
<dbReference type="SwissPalm" id="Q15102"/>
<dbReference type="BioMuta" id="PAFAH1B3"/>
<dbReference type="DMDM" id="3024344"/>
<dbReference type="REPRODUCTION-2DPAGE" id="IPI00014808"/>
<dbReference type="CPTAC" id="CPTAC-246"/>
<dbReference type="CPTAC" id="CPTAC-247"/>
<dbReference type="jPOST" id="Q15102"/>
<dbReference type="MassIVE" id="Q15102"/>
<dbReference type="PaxDb" id="9606-ENSP00000444935"/>
<dbReference type="PeptideAtlas" id="Q15102"/>
<dbReference type="ProteomicsDB" id="60435"/>
<dbReference type="Pumba" id="Q15102"/>
<dbReference type="Antibodypedia" id="30926">
    <property type="antibodies" value="289 antibodies from 25 providers"/>
</dbReference>
<dbReference type="DNASU" id="5050"/>
<dbReference type="Ensembl" id="ENST00000262890.8">
    <property type="protein sequence ID" value="ENSP00000262890.2"/>
    <property type="gene ID" value="ENSG00000079462.8"/>
</dbReference>
<dbReference type="Ensembl" id="ENST00000538771.5">
    <property type="protein sequence ID" value="ENSP00000444935.1"/>
    <property type="gene ID" value="ENSG00000079462.8"/>
</dbReference>
<dbReference type="GeneID" id="5050"/>
<dbReference type="KEGG" id="hsa:5050"/>
<dbReference type="MANE-Select" id="ENST00000262890.8">
    <property type="protein sequence ID" value="ENSP00000262890.2"/>
    <property type="RefSeq nucleotide sequence ID" value="NM_002573.4"/>
    <property type="RefSeq protein sequence ID" value="NP_002564.1"/>
</dbReference>
<dbReference type="UCSC" id="uc002otg.3">
    <property type="organism name" value="human"/>
</dbReference>
<dbReference type="AGR" id="HGNC:8576"/>
<dbReference type="CTD" id="5050"/>
<dbReference type="DisGeNET" id="5050"/>
<dbReference type="GeneCards" id="PAFAH1B3"/>
<dbReference type="HGNC" id="HGNC:8576">
    <property type="gene designation" value="PAFAH1B3"/>
</dbReference>
<dbReference type="HPA" id="ENSG00000079462">
    <property type="expression patterns" value="Low tissue specificity"/>
</dbReference>
<dbReference type="MalaCards" id="PAFAH1B3"/>
<dbReference type="MIM" id="603074">
    <property type="type" value="gene"/>
</dbReference>
<dbReference type="neXtProt" id="NX_Q15102"/>
<dbReference type="OpenTargets" id="ENSG00000079462"/>
<dbReference type="PharmGKB" id="PA32907"/>
<dbReference type="VEuPathDB" id="HostDB:ENSG00000079462"/>
<dbReference type="eggNOG" id="KOG1388">
    <property type="taxonomic scope" value="Eukaryota"/>
</dbReference>
<dbReference type="GeneTree" id="ENSGT00950000183199"/>
<dbReference type="InParanoid" id="Q15102"/>
<dbReference type="OMA" id="QTQNVLW"/>
<dbReference type="OrthoDB" id="505607at2759"/>
<dbReference type="PAN-GO" id="Q15102">
    <property type="GO annotations" value="3 GO annotations based on evolutionary models"/>
</dbReference>
<dbReference type="PhylomeDB" id="Q15102"/>
<dbReference type="TreeFam" id="TF323955"/>
<dbReference type="PathwayCommons" id="Q15102"/>
<dbReference type="Reactome" id="R-HSA-6811436">
    <property type="pathway name" value="COPI-independent Golgi-to-ER retrograde traffic"/>
</dbReference>
<dbReference type="SignaLink" id="Q15102"/>
<dbReference type="BioGRID-ORCS" id="5050">
    <property type="hits" value="12 hits in 1152 CRISPR screens"/>
</dbReference>
<dbReference type="ChiTaRS" id="PAFAH1B3">
    <property type="organism name" value="human"/>
</dbReference>
<dbReference type="GeneWiki" id="PAFAH1B3"/>
<dbReference type="GenomeRNAi" id="5050"/>
<dbReference type="Pharos" id="Q15102">
    <property type="development level" value="Tbio"/>
</dbReference>
<dbReference type="PRO" id="PR:Q15102"/>
<dbReference type="Proteomes" id="UP000005640">
    <property type="component" value="Chromosome 19"/>
</dbReference>
<dbReference type="RNAct" id="Q15102">
    <property type="molecule type" value="protein"/>
</dbReference>
<dbReference type="Bgee" id="ENSG00000079462">
    <property type="expression patterns" value="Expressed in cortical plate and 143 other cell types or tissues"/>
</dbReference>
<dbReference type="ExpressionAtlas" id="Q15102">
    <property type="expression patterns" value="baseline and differential"/>
</dbReference>
<dbReference type="GO" id="GO:0008247">
    <property type="term" value="C:1-alkyl-2-acetylglycerophosphocholine esterase complex"/>
    <property type="evidence" value="ECO:0000250"/>
    <property type="project" value="UniProtKB"/>
</dbReference>
<dbReference type="GO" id="GO:0005737">
    <property type="term" value="C:cytoplasm"/>
    <property type="evidence" value="ECO:0000318"/>
    <property type="project" value="GO_Central"/>
</dbReference>
<dbReference type="GO" id="GO:0005829">
    <property type="term" value="C:cytosol"/>
    <property type="evidence" value="ECO:0000304"/>
    <property type="project" value="Reactome"/>
</dbReference>
<dbReference type="GO" id="GO:0016020">
    <property type="term" value="C:membrane"/>
    <property type="evidence" value="ECO:0007005"/>
    <property type="project" value="UniProtKB"/>
</dbReference>
<dbReference type="GO" id="GO:0003847">
    <property type="term" value="F:1-alkyl-2-acetylglycerophosphocholine esterase activity"/>
    <property type="evidence" value="ECO:0000250"/>
    <property type="project" value="UniProtKB"/>
</dbReference>
<dbReference type="GO" id="GO:0042802">
    <property type="term" value="F:identical protein binding"/>
    <property type="evidence" value="ECO:0000353"/>
    <property type="project" value="IntAct"/>
</dbReference>
<dbReference type="GO" id="GO:0047179">
    <property type="term" value="F:platelet-activating factor acetyltransferase activity"/>
    <property type="evidence" value="ECO:0000318"/>
    <property type="project" value="GO_Central"/>
</dbReference>
<dbReference type="GO" id="GO:0046982">
    <property type="term" value="F:protein heterodimerization activity"/>
    <property type="evidence" value="ECO:0000314"/>
    <property type="project" value="UniProtKB"/>
</dbReference>
<dbReference type="GO" id="GO:0042803">
    <property type="term" value="F:protein homodimerization activity"/>
    <property type="evidence" value="ECO:0000314"/>
    <property type="project" value="UniProtKB"/>
</dbReference>
<dbReference type="GO" id="GO:0044877">
    <property type="term" value="F:protein-containing complex binding"/>
    <property type="evidence" value="ECO:0007669"/>
    <property type="project" value="Ensembl"/>
</dbReference>
<dbReference type="GO" id="GO:0016042">
    <property type="term" value="P:lipid catabolic process"/>
    <property type="evidence" value="ECO:0007669"/>
    <property type="project" value="UniProtKB-KW"/>
</dbReference>
<dbReference type="GO" id="GO:0006629">
    <property type="term" value="P:lipid metabolic process"/>
    <property type="evidence" value="ECO:0000304"/>
    <property type="project" value="ProtInc"/>
</dbReference>
<dbReference type="GO" id="GO:0007399">
    <property type="term" value="P:nervous system development"/>
    <property type="evidence" value="ECO:0000304"/>
    <property type="project" value="ProtInc"/>
</dbReference>
<dbReference type="GO" id="GO:0007283">
    <property type="term" value="P:spermatogenesis"/>
    <property type="evidence" value="ECO:0007669"/>
    <property type="project" value="Ensembl"/>
</dbReference>
<dbReference type="CDD" id="cd01820">
    <property type="entry name" value="PAF_acetylesterase_like"/>
    <property type="match status" value="1"/>
</dbReference>
<dbReference type="FunFam" id="3.40.50.1110:FF:000004">
    <property type="entry name" value="Platelet-activating factor acetylhydrolase IB subunit beta"/>
    <property type="match status" value="1"/>
</dbReference>
<dbReference type="Gene3D" id="3.40.50.1110">
    <property type="entry name" value="SGNH hydrolase"/>
    <property type="match status" value="1"/>
</dbReference>
<dbReference type="InterPro" id="IPR013830">
    <property type="entry name" value="SGNH_hydro"/>
</dbReference>
<dbReference type="InterPro" id="IPR036514">
    <property type="entry name" value="SGNH_hydro_sf"/>
</dbReference>
<dbReference type="PANTHER" id="PTHR11852">
    <property type="entry name" value="PLATELET-ACTIVATING FACTOR ACETYLHYDROLASE"/>
    <property type="match status" value="1"/>
</dbReference>
<dbReference type="PANTHER" id="PTHR11852:SF2">
    <property type="entry name" value="PLATELET-ACTIVATING FACTOR ACETYLHYDROLASE IB SUBUNIT ALPHA1"/>
    <property type="match status" value="1"/>
</dbReference>
<dbReference type="Pfam" id="PF13472">
    <property type="entry name" value="Lipase_GDSL_2"/>
    <property type="match status" value="1"/>
</dbReference>
<dbReference type="SUPFAM" id="SSF52266">
    <property type="entry name" value="SGNH hydrolase"/>
    <property type="match status" value="1"/>
</dbReference>
<comment type="function">
    <text evidence="3">Alpha1 catalytic subunit of the cytosolic type I platelet-activating factor (PAF) acetylhydrolase (PAF-AH (I)) heterotetrameric enzyme that catalyzes the hydrolyze of the acetyl group at the sn-2 position of PAF and its analogs and modulates the action of PAF. The activity and substrate specificity of PAF-AH (I) are affected by its subunit composition. Both alpha1/alpha1 homodimer (PAFAH1B3/PAFAH1B3 homodimer) and alpha1/alpha2 heterodimer(PAFAH1B3/PAFAH1B2 heterodimer) hydrolyze 1-O-alkyl-2-acetyl-sn-glycero-3-phosphoric acid (AAGPA) more efficiently than PAF, but they have little hydrolytic activity towards 1-O-alkyl-2-acetyl-sn-glycero-3-phosphorylethanolamine (AAGPE). Plays an important role during the development of brain.</text>
</comment>
<comment type="catalytic activity">
    <reaction evidence="3">
        <text>a 1-O-alkyl-2-acetyl-sn-glycero-3-phosphocholine + H2O = a 1-O-alkyl-sn-glycero-3-phosphocholine + acetate + H(+)</text>
        <dbReference type="Rhea" id="RHEA:17777"/>
        <dbReference type="ChEBI" id="CHEBI:15377"/>
        <dbReference type="ChEBI" id="CHEBI:15378"/>
        <dbReference type="ChEBI" id="CHEBI:30089"/>
        <dbReference type="ChEBI" id="CHEBI:30909"/>
        <dbReference type="ChEBI" id="CHEBI:36707"/>
        <dbReference type="EC" id="3.1.1.47"/>
    </reaction>
    <physiologicalReaction direction="left-to-right" evidence="3">
        <dbReference type="Rhea" id="RHEA:17778"/>
    </physiologicalReaction>
</comment>
<comment type="catalytic activity">
    <reaction evidence="3">
        <text>1-O-hexadecyl-2-acetyl-sn-glycero-3-phosphocholine + H2O = 1-O-hexadecyl-sn-glycero-3-phosphocholine + acetate + H(+)</text>
        <dbReference type="Rhea" id="RHEA:40479"/>
        <dbReference type="ChEBI" id="CHEBI:15377"/>
        <dbReference type="ChEBI" id="CHEBI:15378"/>
        <dbReference type="ChEBI" id="CHEBI:30089"/>
        <dbReference type="ChEBI" id="CHEBI:44811"/>
        <dbReference type="ChEBI" id="CHEBI:64496"/>
    </reaction>
    <physiologicalReaction direction="left-to-right" evidence="3">
        <dbReference type="Rhea" id="RHEA:40480"/>
    </physiologicalReaction>
</comment>
<comment type="catalytic activity">
    <reaction evidence="3">
        <text>1-O-hexadecyl-2-acetyl-sn-glycero-3-phosphate + H2O = 1-O-hexadecyl-sn-glycero-3-phosphate + acetate + H(+)</text>
        <dbReference type="Rhea" id="RHEA:41704"/>
        <dbReference type="ChEBI" id="CHEBI:15377"/>
        <dbReference type="ChEBI" id="CHEBI:15378"/>
        <dbReference type="ChEBI" id="CHEBI:30089"/>
        <dbReference type="ChEBI" id="CHEBI:77580"/>
        <dbReference type="ChEBI" id="CHEBI:78385"/>
    </reaction>
    <physiologicalReaction direction="left-to-right" evidence="3">
        <dbReference type="Rhea" id="RHEA:41705"/>
    </physiologicalReaction>
</comment>
<comment type="activity regulation">
    <text evidence="3">Beta subunit (PAFAH1B1) inhibits the acetylhydrolase activity of the alpha1/alpha1 catalytic homodimer.</text>
</comment>
<comment type="subunit">
    <text evidence="3 4">Forms a catalytic dimer which is either homodimer (alpha1/alpha1 homodimer) or heterodimer with PAFAH1B2 (alpha1/alpha2 heterodimer). Component of the cytosolic (PAF-AH (I)) heterotetrameric enzyme, which is composed of PAFAH1B1 (beta), PAFAH1B2 (alpha2) and PAFAH1B3 (alpha1) subunits. The catalytic activity of the enzyme resides in the alpha1 (PAFAH1B3) and alpha2 (PAFAH1B2) subunits, whereas the beta subunit (PAFAH1B1) has regulatory activity. Trimer formation is not essential for the catalytic activity (By similarity). Interacts with VLDLR; this interaction may modulate the Reelin pathway (By similarity).</text>
</comment>
<comment type="interaction">
    <interactant intactId="EBI-711522">
        <id>Q15102</id>
    </interactant>
    <interactant intactId="EBI-739832">
        <id>Q8TBB1</id>
        <label>LNX1</label>
    </interactant>
    <organismsDiffer>false</organismsDiffer>
    <experiments>9</experiments>
</comment>
<comment type="interaction">
    <interactant intactId="EBI-711522">
        <id>Q15102</id>
    </interactant>
    <interactant intactId="EBI-19944212">
        <id>A8MW99</id>
        <label>MEI4</label>
    </interactant>
    <organismsDiffer>false</organismsDiffer>
    <experiments>3</experiments>
</comment>
<comment type="interaction">
    <interactant intactId="EBI-711522">
        <id>Q15102</id>
    </interactant>
    <interactant intactId="EBI-740897">
        <id>Q9GZT8</id>
        <label>NIF3L1</label>
    </interactant>
    <organismsDiffer>false</organismsDiffer>
    <experiments>3</experiments>
</comment>
<comment type="interaction">
    <interactant intactId="EBI-711522">
        <id>Q15102</id>
    </interactant>
    <interactant intactId="EBI-720620">
        <id>P43034</id>
        <label>PAFAH1B1</label>
    </interactant>
    <organismsDiffer>false</organismsDiffer>
    <experiments>3</experiments>
</comment>
<comment type="interaction">
    <interactant intactId="EBI-711522">
        <id>Q15102</id>
    </interactant>
    <interactant intactId="EBI-713724">
        <id>P68402</id>
        <label>PAFAH1B2</label>
    </interactant>
    <organismsDiffer>false</organismsDiffer>
    <experiments>6</experiments>
</comment>
<comment type="interaction">
    <interactant intactId="EBI-711522">
        <id>Q15102</id>
    </interactant>
    <interactant intactId="EBI-711522">
        <id>Q15102</id>
        <label>PAFAH1B3</label>
    </interactant>
    <organismsDiffer>false</organismsDiffer>
    <experiments>8</experiments>
</comment>
<comment type="interaction">
    <interactant intactId="EBI-711522">
        <id>Q15102</id>
    </interactant>
    <interactant intactId="EBI-79165">
        <id>Q9NRD5</id>
        <label>PICK1</label>
    </interactant>
    <organismsDiffer>false</organismsDiffer>
    <experiments>3</experiments>
</comment>
<comment type="interaction">
    <interactant intactId="EBI-711522">
        <id>Q15102</id>
    </interactant>
    <interactant intactId="EBI-742426">
        <id>Q9H190</id>
        <label>SDCBP2</label>
    </interactant>
    <organismsDiffer>false</organismsDiffer>
    <experiments>5</experiments>
</comment>
<comment type="subcellular location">
    <subcellularLocation>
        <location>Cytoplasm</location>
    </subcellularLocation>
</comment>
<comment type="tissue specificity">
    <text>In the adult, expressed in brain, skeletal muscle, kidney, thymus, spleen, colon, testis, ovary and peripheral blood leukocytes. In the fetus, highest expression occurs in brain.</text>
</comment>
<comment type="miscellaneous">
    <text evidence="1 2 3 5">Originally the subunits of the type I platelet-activating factor (PAF) acetylhydrolase was named alpha (PAFAH1B1), beta (PAFAH1B2) and gamma (PAFAH1B3) (By similarity) (PubMed:7669037). Now these subunits have been renamed beta (PAFAH1B1), alpha2 (PAFAH1B2) and alpha1 (PAFAH1B3) respectively (By similarity).</text>
</comment>
<comment type="similarity">
    <text evidence="6">Belongs to the 'GDSL' lipolytic enzyme family. Platelet-activating factor acetylhydrolase IB beta/gamma subunits subfamily.</text>
</comment>
<proteinExistence type="evidence at protein level"/>
<gene>
    <name evidence="7" type="primary">PAFAH1B3</name>
    <name type="synonym">PAFAHG</name>
</gene>
<evidence type="ECO:0000250" key="1">
    <source>
        <dbReference type="UniProtKB" id="P43034"/>
    </source>
</evidence>
<evidence type="ECO:0000250" key="2">
    <source>
        <dbReference type="UniProtKB" id="P68402"/>
    </source>
</evidence>
<evidence type="ECO:0000250" key="3">
    <source>
        <dbReference type="UniProtKB" id="Q29460"/>
    </source>
</evidence>
<evidence type="ECO:0000250" key="4">
    <source>
        <dbReference type="UniProtKB" id="Q61205"/>
    </source>
</evidence>
<evidence type="ECO:0000303" key="5">
    <source>
    </source>
</evidence>
<evidence type="ECO:0000305" key="6"/>
<evidence type="ECO:0000312" key="7">
    <source>
        <dbReference type="HGNC" id="HGNC:8576"/>
    </source>
</evidence>
<evidence type="ECO:0007744" key="8">
    <source>
    </source>
</evidence>
<evidence type="ECO:0007744" key="9">
    <source>
    </source>
</evidence>
<evidence type="ECO:0007744" key="10">
    <source>
    </source>
</evidence>
<evidence type="ECO:0007744" key="11">
    <source>
    </source>
</evidence>
<keyword id="KW-0007">Acetylation</keyword>
<keyword id="KW-0963">Cytoplasm</keyword>
<keyword id="KW-0903">Direct protein sequencing</keyword>
<keyword id="KW-0378">Hydrolase</keyword>
<keyword id="KW-0442">Lipid degradation</keyword>
<keyword id="KW-0443">Lipid metabolism</keyword>
<keyword id="KW-0597">Phosphoprotein</keyword>
<keyword id="KW-1267">Proteomics identification</keyword>
<keyword id="KW-1185">Reference proteome</keyword>
<name>PA1B3_HUMAN</name>
<protein>
    <recommendedName>
        <fullName evidence="6">Platelet-activating factor acetylhydrolase IB subunit alpha1</fullName>
        <ecNumber evidence="3">3.1.1.47</ecNumber>
    </recommendedName>
    <alternativeName>
        <fullName>PAF acetylhydrolase 29 kDa subunit</fullName>
        <shortName>PAF-AH 29 kDa subunit</shortName>
    </alternativeName>
    <alternativeName>
        <fullName>PAF-AH subunit gamma</fullName>
        <shortName>PAFAH subunit gamma</shortName>
    </alternativeName>
</protein>
<organism>
    <name type="scientific">Homo sapiens</name>
    <name type="common">Human</name>
    <dbReference type="NCBI Taxonomy" id="9606"/>
    <lineage>
        <taxon>Eukaryota</taxon>
        <taxon>Metazoa</taxon>
        <taxon>Chordata</taxon>
        <taxon>Craniata</taxon>
        <taxon>Vertebrata</taxon>
        <taxon>Euteleostomi</taxon>
        <taxon>Mammalia</taxon>
        <taxon>Eutheria</taxon>
        <taxon>Euarchontoglires</taxon>
        <taxon>Primates</taxon>
        <taxon>Haplorrhini</taxon>
        <taxon>Catarrhini</taxon>
        <taxon>Hominidae</taxon>
        <taxon>Homo</taxon>
    </lineage>
</organism>
<sequence length="231" mass="25734">MSGEENPASKPTPVQDVQGDGRWMSLHHRFVADSKDKEPEVVFIGDSLVQLMHQCEIWRELFSPLHALNFGIGGDGTQHVLWRLENGELEHIRPKIVVVWVGTNNHGHTAEQVTGGIKAIVQLVNERQPQARVVVLGLLPRGQHPNPLREKNRQVNELVRAALAGHPRAHFLDADPGFVHSDGTISHHDMYDYLHLSRLGYTPVCRALHSLLLRLLAQDQGQGAPLLEPAP</sequence>